<proteinExistence type="evidence at transcript level"/>
<organism>
    <name type="scientific">Pestalotiopsis microspora</name>
    <dbReference type="NCBI Taxonomy" id="85828"/>
    <lineage>
        <taxon>Eukaryota</taxon>
        <taxon>Fungi</taxon>
        <taxon>Dikarya</taxon>
        <taxon>Ascomycota</taxon>
        <taxon>Pezizomycotina</taxon>
        <taxon>Sordariomycetes</taxon>
        <taxon>Xylariomycetidae</taxon>
        <taxon>Amphisphaeriales</taxon>
        <taxon>Sporocadaceae</taxon>
        <taxon>Pestalotiopsis</taxon>
    </lineage>
</organism>
<keyword id="KW-0511">Multifunctional enzyme</keyword>
<keyword id="KW-0596">Phosphopantetheine</keyword>
<keyword id="KW-0597">Phosphoprotein</keyword>
<keyword id="KW-0808">Transferase</keyword>
<accession>A0A1P8NTI3</accession>
<reference key="1">
    <citation type="journal article" date="2019" name="J. Microbiol. Biotechnol.">
        <title>A gene cluster for the biosynthesis of dibenzodioxocinons in the endophyte Pestalotiopsis microspora, a taxol producer.</title>
        <authorList>
            <person name="Liu Y."/>
            <person name="Chen L."/>
            <person name="Xie Q."/>
            <person name="Yu X."/>
            <person name="Duan A."/>
            <person name="Lin Y."/>
            <person name="Xiang B."/>
            <person name="Hao X."/>
            <person name="Chen W."/>
            <person name="Zhu X."/>
        </authorList>
    </citation>
    <scope>NUCLEOTIDE SEQUENCE [MRNA]</scope>
    <scope>FUNCTION</scope>
    <scope>DOMAIN</scope>
    <scope>PATHWAY</scope>
    <source>
        <strain>NK17</strain>
    </source>
</reference>
<reference key="2">
    <citation type="journal article" date="2017" name="J. Ind. Microbiol. Biotechnol.">
        <title>Improved pestalotiollide B production by deleting competing polyketide synthase genes in Pestalotiopsis microspora.</title>
        <authorList>
            <person name="Chen L."/>
            <person name="Li Y."/>
            <person name="Zhang Q."/>
            <person name="Wang D."/>
            <person name="Akhberdi O."/>
            <person name="Wei D."/>
            <person name="Pan J."/>
            <person name="Zhu X."/>
        </authorList>
    </citation>
    <scope>FUNCTION</scope>
    <scope>DISRUPTION PHENOTYPE</scope>
</reference>
<reference key="3">
    <citation type="journal article" date="2022" name="Microbiol. Res.">
        <title>Acquiring novel chemicals by overexpression of a transcription factor DibT in the dibenzodioxocinone biosynthetic cluster in Pestalotiopsis microspora.</title>
        <authorList>
            <person name="Liu Y."/>
            <person name="Fu Y."/>
            <person name="Zhou M."/>
            <person name="Hao X."/>
            <person name="Zhang P."/>
            <person name="Zhu X."/>
        </authorList>
    </citation>
    <scope>INDUCTION</scope>
</reference>
<gene>
    <name evidence="8" type="primary">pks8</name>
    <name evidence="9" type="ORF">GME11356</name>
</gene>
<dbReference type="EC" id="2.3.1.-" evidence="10"/>
<dbReference type="EMBL" id="KX190790">
    <property type="protein sequence ID" value="APX43979.1"/>
    <property type="molecule type" value="mRNA"/>
</dbReference>
<dbReference type="SMR" id="A0A1P8NTI3"/>
<dbReference type="GO" id="GO:0004315">
    <property type="term" value="F:3-oxoacyl-[acyl-carrier-protein] synthase activity"/>
    <property type="evidence" value="ECO:0007669"/>
    <property type="project" value="InterPro"/>
</dbReference>
<dbReference type="GO" id="GO:0004312">
    <property type="term" value="F:fatty acid synthase activity"/>
    <property type="evidence" value="ECO:0007669"/>
    <property type="project" value="TreeGrafter"/>
</dbReference>
<dbReference type="GO" id="GO:0031177">
    <property type="term" value="F:phosphopantetheine binding"/>
    <property type="evidence" value="ECO:0007669"/>
    <property type="project" value="InterPro"/>
</dbReference>
<dbReference type="GO" id="GO:0006633">
    <property type="term" value="P:fatty acid biosynthetic process"/>
    <property type="evidence" value="ECO:0007669"/>
    <property type="project" value="InterPro"/>
</dbReference>
<dbReference type="GO" id="GO:0044550">
    <property type="term" value="P:secondary metabolite biosynthetic process"/>
    <property type="evidence" value="ECO:0007669"/>
    <property type="project" value="TreeGrafter"/>
</dbReference>
<dbReference type="CDD" id="cd00833">
    <property type="entry name" value="PKS"/>
    <property type="match status" value="1"/>
</dbReference>
<dbReference type="FunFam" id="3.40.366.10:FF:000017">
    <property type="entry name" value="Non-reducing polyketide synthase aptA"/>
    <property type="match status" value="1"/>
</dbReference>
<dbReference type="FunFam" id="3.40.366.10:FF:000002">
    <property type="entry name" value="Probable polyketide synthase 2"/>
    <property type="match status" value="1"/>
</dbReference>
<dbReference type="FunFam" id="1.10.1200.10:FF:000011">
    <property type="entry name" value="Sterigmatocystin biosynthesis polyketide synthase"/>
    <property type="match status" value="1"/>
</dbReference>
<dbReference type="FunFam" id="3.10.129.110:FF:000001">
    <property type="entry name" value="Sterigmatocystin biosynthesis polyketide synthase"/>
    <property type="match status" value="1"/>
</dbReference>
<dbReference type="FunFam" id="3.40.47.10:FF:000031">
    <property type="entry name" value="Sterigmatocystin biosynthesis polyketide synthase"/>
    <property type="match status" value="1"/>
</dbReference>
<dbReference type="Gene3D" id="3.30.70.3290">
    <property type="match status" value="1"/>
</dbReference>
<dbReference type="Gene3D" id="3.40.47.10">
    <property type="match status" value="1"/>
</dbReference>
<dbReference type="Gene3D" id="1.10.1200.10">
    <property type="entry name" value="ACP-like"/>
    <property type="match status" value="1"/>
</dbReference>
<dbReference type="Gene3D" id="3.40.366.10">
    <property type="entry name" value="Malonyl-Coenzyme A Acyl Carrier Protein, domain 2"/>
    <property type="match status" value="2"/>
</dbReference>
<dbReference type="Gene3D" id="3.10.129.110">
    <property type="entry name" value="Polyketide synthase dehydratase"/>
    <property type="match status" value="1"/>
</dbReference>
<dbReference type="InterPro" id="IPR001227">
    <property type="entry name" value="Ac_transferase_dom_sf"/>
</dbReference>
<dbReference type="InterPro" id="IPR036736">
    <property type="entry name" value="ACP-like_sf"/>
</dbReference>
<dbReference type="InterPro" id="IPR014043">
    <property type="entry name" value="Acyl_transferase_dom"/>
</dbReference>
<dbReference type="InterPro" id="IPR016035">
    <property type="entry name" value="Acyl_Trfase/lysoPLipase"/>
</dbReference>
<dbReference type="InterPro" id="IPR018201">
    <property type="entry name" value="Ketoacyl_synth_AS"/>
</dbReference>
<dbReference type="InterPro" id="IPR014031">
    <property type="entry name" value="Ketoacyl_synth_C"/>
</dbReference>
<dbReference type="InterPro" id="IPR014030">
    <property type="entry name" value="Ketoacyl_synth_N"/>
</dbReference>
<dbReference type="InterPro" id="IPR016036">
    <property type="entry name" value="Malonyl_transacylase_ACP-bd"/>
</dbReference>
<dbReference type="InterPro" id="IPR020841">
    <property type="entry name" value="PKS_Beta-ketoAc_synthase_dom"/>
</dbReference>
<dbReference type="InterPro" id="IPR042104">
    <property type="entry name" value="PKS_dehydratase_sf"/>
</dbReference>
<dbReference type="InterPro" id="IPR049900">
    <property type="entry name" value="PKS_mFAS_DH"/>
</dbReference>
<dbReference type="InterPro" id="IPR050091">
    <property type="entry name" value="PKS_NRPS_Biosynth_Enz"/>
</dbReference>
<dbReference type="InterPro" id="IPR020806">
    <property type="entry name" value="PKS_PP-bd"/>
</dbReference>
<dbReference type="InterPro" id="IPR009081">
    <property type="entry name" value="PP-bd_ACP"/>
</dbReference>
<dbReference type="InterPro" id="IPR030918">
    <property type="entry name" value="PT_fungal_PKS"/>
</dbReference>
<dbReference type="InterPro" id="IPR032088">
    <property type="entry name" value="SAT"/>
</dbReference>
<dbReference type="InterPro" id="IPR016039">
    <property type="entry name" value="Thiolase-like"/>
</dbReference>
<dbReference type="NCBIfam" id="TIGR04532">
    <property type="entry name" value="PT_fungal_PKS"/>
    <property type="match status" value="1"/>
</dbReference>
<dbReference type="PANTHER" id="PTHR43775">
    <property type="entry name" value="FATTY ACID SYNTHASE"/>
    <property type="match status" value="1"/>
</dbReference>
<dbReference type="PANTHER" id="PTHR43775:SF37">
    <property type="entry name" value="SI:DKEY-61P9.11"/>
    <property type="match status" value="1"/>
</dbReference>
<dbReference type="Pfam" id="PF00698">
    <property type="entry name" value="Acyl_transf_1"/>
    <property type="match status" value="1"/>
</dbReference>
<dbReference type="Pfam" id="PF22621">
    <property type="entry name" value="CurL-like_PKS_C"/>
    <property type="match status" value="1"/>
</dbReference>
<dbReference type="Pfam" id="PF00109">
    <property type="entry name" value="ketoacyl-synt"/>
    <property type="match status" value="1"/>
</dbReference>
<dbReference type="Pfam" id="PF02801">
    <property type="entry name" value="Ketoacyl-synt_C"/>
    <property type="match status" value="1"/>
</dbReference>
<dbReference type="Pfam" id="PF00550">
    <property type="entry name" value="PP-binding"/>
    <property type="match status" value="1"/>
</dbReference>
<dbReference type="Pfam" id="PF16073">
    <property type="entry name" value="SAT"/>
    <property type="match status" value="1"/>
</dbReference>
<dbReference type="SMART" id="SM00827">
    <property type="entry name" value="PKS_AT"/>
    <property type="match status" value="1"/>
</dbReference>
<dbReference type="SMART" id="SM00825">
    <property type="entry name" value="PKS_KS"/>
    <property type="match status" value="1"/>
</dbReference>
<dbReference type="SMART" id="SM00823">
    <property type="entry name" value="PKS_PP"/>
    <property type="match status" value="1"/>
</dbReference>
<dbReference type="SUPFAM" id="SSF47336">
    <property type="entry name" value="ACP-like"/>
    <property type="match status" value="1"/>
</dbReference>
<dbReference type="SUPFAM" id="SSF52151">
    <property type="entry name" value="FabD/lysophospholipase-like"/>
    <property type="match status" value="1"/>
</dbReference>
<dbReference type="SUPFAM" id="SSF55048">
    <property type="entry name" value="Probable ACP-binding domain of malonyl-CoA ACP transacylase"/>
    <property type="match status" value="1"/>
</dbReference>
<dbReference type="SUPFAM" id="SSF53901">
    <property type="entry name" value="Thiolase-like"/>
    <property type="match status" value="1"/>
</dbReference>
<dbReference type="PROSITE" id="PS50075">
    <property type="entry name" value="CARRIER"/>
    <property type="match status" value="1"/>
</dbReference>
<dbReference type="PROSITE" id="PS00606">
    <property type="entry name" value="KS3_1"/>
    <property type="match status" value="1"/>
</dbReference>
<dbReference type="PROSITE" id="PS52004">
    <property type="entry name" value="KS3_2"/>
    <property type="match status" value="1"/>
</dbReference>
<dbReference type="PROSITE" id="PS00012">
    <property type="entry name" value="PHOSPHOPANTETHEINE"/>
    <property type="match status" value="1"/>
</dbReference>
<dbReference type="PROSITE" id="PS52019">
    <property type="entry name" value="PKS_MFAS_DH"/>
    <property type="match status" value="1"/>
</dbReference>
<sequence>MRPTTPSTTESPDNFSNMKLLYFSNEFPHDDLAGLSRQLTLLSKQKQFPHLARFLDHATEAVRDEVRQLPWSLRNTIPSFDSVFNFIEHASLRKGELGASIDGVLLVVVQLGTLIKYYEENPKKYDLNTGNAALSGLGLGLLSTAAVSLSSSVSDLAVAGVEVVRLAFRLGVVVGSVSSNLESRDPTSPPVSWAAVVPDVTVDEARDELDAFYAREKMPSTSKIFISAWSHNSVTISGPPSRLKHLFRTSEFFRGQKIINLPVYGGLCHAAHLYNQEHVREVVSETDSLKELSSRASPKLTTFATSTGKRFEAETARELFEQIVAEIMTKEIRWGTVVDSVLAQAHTTSCSDIQVLVFRKSLPVYDLLTAFSSKQPGLEVSTLELIPTIPASLDNGTPVSGGSSKSSIAIVGMSCRMPGGATDTESFWNLLEKGMDVHRTIPADRFDIDTHHDPKGKAMNSSHTAYGCFIDEPGLFDAPFFNMSPREAQQTDPMQRLALVTAYEALERAGYVANRTPATSLERIGTFYGQASDDYREVNTAQEISTYFIPGGCRAFGPGRINYFFKFAGPSFSIDTACSSSLATIQTACTSLWNKDTDMAVAGGMNVLTNSDAFAGLSHGHFLTKTPNACKTWDSEADGYCRADGIGSIVMKRLEDAIADNDNIIGVIRGAATNHSAEAVSITHPHAGAQSFLSSKVLSAAGIDPFDVSYVEMHGTGTQAGDKEEMKSVTDVFAPAGPKRRSMRQPLHVGAVKANVGHGEAVAGVTALIKVLLMFQKSMIPPHVGIKNSLNPALPSDLAERNVRIPYTRQAWPREKDRKRIAAVNNFSAAGGNTMIAIEEPPLPRNIAPEDEDPRTTHAVTVSAKSKVSLEGNLKRLIAFLENNPDVRMSDLAYTTAARKYHHNHRIAVAAADVPQLKKKLSAQLNSIDSVKSISNLQPLIAFAFTGQGASYKSMDLQLFHHEPTFRSQILHLNSLALAQGFPSFLPAVDGSFPKDHAHSAVVTQMALVAIEISLAAYWASLGVVPNVVVGHSLGEYAALYVAGVLSASDAIYLVGQRARLLEERVQAGSHKMMAVRASLADIQKIAAGMPYEVACINGPRDTVLSGLSKDLDTLIEPLQKAGFKCYSLDVAYAFHSSQTDPILEEFGELAETGAIFHAPKLPVLSPLLGKVIFDEKTLNATYMKRATRECVNYLAAVETGAKLSLVDDNTLWVEIGPHPVCINMSKSSLRSVGAAVPSMRRDESNWATMAQSLSTLHCAGATIRWNEFHKPFEKGLRLLDLPTYAWNNKNYWIQYNGDWALTKGNTYYDAQKKALETAKALPAPRLSDLKTSSVQRIIEESFDGSAGTVVMQSDLMEADFLAAAHGHKMNGCGVVTSSIHADISYTLGSYLLKKMSPSSGDIAMNVADLEVVKGLVAQKNTKVPQMIQVSISTENINTGTAQLRWQNVNAQGIPDEPFATATLEYGDRSAWLSSWVPQTHLIQGRIEALETLAAQGIANRLSHNMAYLLFANNLVDYATKYRGMQSVVINGLEAFADVTLTTEKGGVWTVPPYFIDSVAHLAGFVMNVSDAIDTKANYCVTPGWSSMRFAKPLVAGAKYRSYVKMIPTVEDRSVYLGDVYVLQDNEIIGIVGGIKFRQYPRILLNRFFSAPDEASPSPNPTHGATAKAQAQPKTIAASHGDEKHFATSVQISTPSKIGHQLIVKPVAIQAPPPAGPVVVALKDPEVQGSPVVVASAAAAVDTNSVASKAISMIANEAALEQADLQDEASFAELGIDSLMSLVISEKLREELGVVVSGSLFLEYPTIGDLRSWLMEYYG</sequence>
<protein>
    <recommendedName>
        <fullName evidence="8">Non-reducing polyketide synthase 8</fullName>
        <ecNumber evidence="10">2.3.1.-</ecNumber>
    </recommendedName>
    <alternativeName>
        <fullName evidence="9">Dibenzodioxocinones biosynthesis cluster protein pks8</fullName>
    </alternativeName>
</protein>
<feature type="chain" id="PRO_0000456737" description="Non-reducing polyketide synthase 8">
    <location>
        <begin position="1"/>
        <end position="1819"/>
    </location>
</feature>
<feature type="domain" description="Starter acyltransferase (SAT)" evidence="1">
    <location>
        <begin position="38"/>
        <end position="265"/>
    </location>
</feature>
<feature type="domain" description="Ketosynthase family 3 (KS3)" evidence="3">
    <location>
        <begin position="405"/>
        <end position="840"/>
    </location>
</feature>
<feature type="domain" description="Malonyl-CoA:ACP transacylase (MAT)" evidence="1">
    <location>
        <begin position="943"/>
        <end position="1262"/>
    </location>
</feature>
<feature type="domain" description="PKS/mFAS DH" evidence="4">
    <location>
        <begin position="1336"/>
        <end position="1646"/>
    </location>
</feature>
<feature type="domain" description="Carrier" evidence="2">
    <location>
        <begin position="1741"/>
        <end position="1818"/>
    </location>
</feature>
<feature type="region of interest" description="N-terminal hotdog fold" evidence="4">
    <location>
        <begin position="1336"/>
        <end position="1476"/>
    </location>
</feature>
<feature type="region of interest" description="Dehydratase (DH) domain" evidence="1">
    <location>
        <begin position="1404"/>
        <end position="1642"/>
    </location>
</feature>
<feature type="region of interest" description="C-terminal hotdog fold" evidence="4">
    <location>
        <begin position="1498"/>
        <end position="1646"/>
    </location>
</feature>
<feature type="active site" description="For beta-ketoacyl synthase activity" evidence="3">
    <location>
        <position position="578"/>
    </location>
</feature>
<feature type="active site" description="For beta-ketoacyl synthase activity" evidence="3">
    <location>
        <position position="714"/>
    </location>
</feature>
<feature type="active site" description="For beta-ketoacyl synthase activity" evidence="3">
    <location>
        <position position="758"/>
    </location>
</feature>
<feature type="active site" description="Proton acceptor; for dehydratase activity" evidence="4">
    <location>
        <position position="1368"/>
    </location>
</feature>
<feature type="active site" description="Proton donor; for dehydratase activity" evidence="4">
    <location>
        <position position="1557"/>
    </location>
</feature>
<feature type="modified residue" description="O-(pantetheine 4'-phosphoryl)serine" evidence="2">
    <location>
        <position position="1778"/>
    </location>
</feature>
<name>PKS8_PESMI</name>
<comment type="function">
    <text evidence="5 6 11">Non-reducing polyketide synthase; part of the gene cluster that mediates the biosynthesis of dibenzodioxocinones such as pestalotiollide B, a novel class of inhibitors against cholesterol ester transfer protein (CEPT) (PubMed:28005187, PubMed:31474098). The biosynthesis initiates from condensation of acetate and malonate units catalyzed by the non-reducing PKS pks8/GME11356. Pks8/GME11356 lacks a thioesterase (TE) domain, which is important to the cyclizing of the third ring of atrochrysone carboxylic acid, and the esterase GME11355 might play the role of TE and catalyzes the cyclization reaction of the C ring. The lactamase-like protein GME11357 (or other beta-lactamases in Pestalotiopsis microspora) probably hydrolyzes the thioester bond between the ACP of pks8/GME11356 and the intermediate to release atrochrysone carboxylic acid, which is spontaneously dehydrates to form endocrocin anthrone. Endocrocin anthrone is further converted to emodin via the endocrocin intermediate. Emodin is then oxidized by several enzymes such as the Baeyer-Villiger oxidase GME11358, the oxidoreductase GME11367, the short chain dehydrogenase/reductase GME11373, as well as by other oxidoreductases from the cluster, to modify the A and C rings and open the B ring, and finally yield monodictyphenone. The prenyltransferase GME11375 may catalyze the addition reaction between the C5 side chains and the carbon bone of dibenzodioxocinones. The remaining biochemical reactions to the final product dibenzodioxocinones should be methylation catalyzed by methyltransferase GME11366 and reduction and lactonization reaction catalyzed by a series of oxidordeuctases (Probable).</text>
</comment>
<comment type="cofactor">
    <cofactor evidence="2">
        <name>pantetheine 4'-phosphate</name>
        <dbReference type="ChEBI" id="CHEBI:47942"/>
    </cofactor>
</comment>
<comment type="pathway">
    <text evidence="6">Secondary metabolite biosynthesis.</text>
</comment>
<comment type="induction">
    <text evidence="7">The expression of the dibenzodioxocinones biosynthesis cluster is positively regulated by the transcription factor dibT.</text>
</comment>
<comment type="domain">
    <text evidence="10">Multidomain protein; including a starter unit:ACP transacylase (SAT) that selects the starter unit; a ketosynthase (KS) that catalyzes repeated decarboxylative condensation to elongate the polyketide backbone; a malonyl-CoA:ACP transacylase (MAT) that selects and transfers the extender unit malonyl-CoA; a dehydratase (DH) domain that reduces hydroxyl groups to enoyl groups; and an acyl-carrier protein (ACP) that serves as the tether of the growing and completed polyketide via its phosphopantetheinyl arm.</text>
</comment>
<comment type="disruption phenotype">
    <text evidence="5">Almost completely abolishes the production of pestalotiollide B.</text>
</comment>
<evidence type="ECO:0000255" key="1"/>
<evidence type="ECO:0000255" key="2">
    <source>
        <dbReference type="PROSITE-ProRule" id="PRU00258"/>
    </source>
</evidence>
<evidence type="ECO:0000255" key="3">
    <source>
        <dbReference type="PROSITE-ProRule" id="PRU01348"/>
    </source>
</evidence>
<evidence type="ECO:0000255" key="4">
    <source>
        <dbReference type="PROSITE-ProRule" id="PRU01363"/>
    </source>
</evidence>
<evidence type="ECO:0000269" key="5">
    <source>
    </source>
</evidence>
<evidence type="ECO:0000269" key="6">
    <source>
    </source>
</evidence>
<evidence type="ECO:0000269" key="7">
    <source>
    </source>
</evidence>
<evidence type="ECO:0000303" key="8">
    <source>
    </source>
</evidence>
<evidence type="ECO:0000303" key="9">
    <source>
    </source>
</evidence>
<evidence type="ECO:0000305" key="10">
    <source>
    </source>
</evidence>
<evidence type="ECO:0000305" key="11">
    <source>
    </source>
</evidence>